<gene>
    <name evidence="1" type="primary">rnhB</name>
    <name type="ordered locus">LHK_00722</name>
</gene>
<sequence>MDRRVCGVDEAGRGPLAGGVYAAAVILDPARPVEGLADSKKLSAARREALAPLIRERALAWCVAWATVEEIDRLNILHATMLAMCRAVDGLAVPPDAIEVDGNRVPPFVLDIPARAIVKGDATVAAISAASILAKTARDAECLELDARYPGYGFAAHKGYPTAAHVAAIERLGVLPVHRRSFGPVKRCLALGQQALEF</sequence>
<dbReference type="EC" id="3.1.26.4" evidence="1"/>
<dbReference type="EMBL" id="CP001154">
    <property type="protein sequence ID" value="ACO73715.1"/>
    <property type="molecule type" value="Genomic_DNA"/>
</dbReference>
<dbReference type="RefSeq" id="WP_012696207.1">
    <property type="nucleotide sequence ID" value="NC_012559.1"/>
</dbReference>
<dbReference type="SMR" id="C1D4C1"/>
<dbReference type="STRING" id="557598.LHK_00722"/>
<dbReference type="KEGG" id="lhk:LHK_00722"/>
<dbReference type="eggNOG" id="COG0164">
    <property type="taxonomic scope" value="Bacteria"/>
</dbReference>
<dbReference type="HOGENOM" id="CLU_036532_3_2_4"/>
<dbReference type="Proteomes" id="UP000002010">
    <property type="component" value="Chromosome"/>
</dbReference>
<dbReference type="GO" id="GO:0005737">
    <property type="term" value="C:cytoplasm"/>
    <property type="evidence" value="ECO:0007669"/>
    <property type="project" value="UniProtKB-SubCell"/>
</dbReference>
<dbReference type="GO" id="GO:0032299">
    <property type="term" value="C:ribonuclease H2 complex"/>
    <property type="evidence" value="ECO:0007669"/>
    <property type="project" value="TreeGrafter"/>
</dbReference>
<dbReference type="GO" id="GO:0030145">
    <property type="term" value="F:manganese ion binding"/>
    <property type="evidence" value="ECO:0007669"/>
    <property type="project" value="UniProtKB-UniRule"/>
</dbReference>
<dbReference type="GO" id="GO:0003723">
    <property type="term" value="F:RNA binding"/>
    <property type="evidence" value="ECO:0007669"/>
    <property type="project" value="InterPro"/>
</dbReference>
<dbReference type="GO" id="GO:0004523">
    <property type="term" value="F:RNA-DNA hybrid ribonuclease activity"/>
    <property type="evidence" value="ECO:0007669"/>
    <property type="project" value="UniProtKB-UniRule"/>
</dbReference>
<dbReference type="GO" id="GO:0043137">
    <property type="term" value="P:DNA replication, removal of RNA primer"/>
    <property type="evidence" value="ECO:0007669"/>
    <property type="project" value="TreeGrafter"/>
</dbReference>
<dbReference type="GO" id="GO:0006298">
    <property type="term" value="P:mismatch repair"/>
    <property type="evidence" value="ECO:0007669"/>
    <property type="project" value="TreeGrafter"/>
</dbReference>
<dbReference type="CDD" id="cd07182">
    <property type="entry name" value="RNase_HII_bacteria_HII_like"/>
    <property type="match status" value="1"/>
</dbReference>
<dbReference type="FunFam" id="3.30.420.10:FF:000006">
    <property type="entry name" value="Ribonuclease HII"/>
    <property type="match status" value="1"/>
</dbReference>
<dbReference type="Gene3D" id="3.30.420.10">
    <property type="entry name" value="Ribonuclease H-like superfamily/Ribonuclease H"/>
    <property type="match status" value="1"/>
</dbReference>
<dbReference type="HAMAP" id="MF_00052_B">
    <property type="entry name" value="RNase_HII_B"/>
    <property type="match status" value="1"/>
</dbReference>
<dbReference type="InterPro" id="IPR022898">
    <property type="entry name" value="RNase_HII"/>
</dbReference>
<dbReference type="InterPro" id="IPR001352">
    <property type="entry name" value="RNase_HII/HIII"/>
</dbReference>
<dbReference type="InterPro" id="IPR024567">
    <property type="entry name" value="RNase_HII/HIII_dom"/>
</dbReference>
<dbReference type="InterPro" id="IPR012337">
    <property type="entry name" value="RNaseH-like_sf"/>
</dbReference>
<dbReference type="InterPro" id="IPR036397">
    <property type="entry name" value="RNaseH_sf"/>
</dbReference>
<dbReference type="NCBIfam" id="NF000595">
    <property type="entry name" value="PRK00015.1-3"/>
    <property type="match status" value="1"/>
</dbReference>
<dbReference type="NCBIfam" id="NF000596">
    <property type="entry name" value="PRK00015.1-4"/>
    <property type="match status" value="1"/>
</dbReference>
<dbReference type="PANTHER" id="PTHR10954">
    <property type="entry name" value="RIBONUCLEASE H2 SUBUNIT A"/>
    <property type="match status" value="1"/>
</dbReference>
<dbReference type="PANTHER" id="PTHR10954:SF18">
    <property type="entry name" value="RIBONUCLEASE HII"/>
    <property type="match status" value="1"/>
</dbReference>
<dbReference type="Pfam" id="PF01351">
    <property type="entry name" value="RNase_HII"/>
    <property type="match status" value="1"/>
</dbReference>
<dbReference type="SUPFAM" id="SSF53098">
    <property type="entry name" value="Ribonuclease H-like"/>
    <property type="match status" value="1"/>
</dbReference>
<dbReference type="PROSITE" id="PS51975">
    <property type="entry name" value="RNASE_H_2"/>
    <property type="match status" value="1"/>
</dbReference>
<evidence type="ECO:0000255" key="1">
    <source>
        <dbReference type="HAMAP-Rule" id="MF_00052"/>
    </source>
</evidence>
<evidence type="ECO:0000255" key="2">
    <source>
        <dbReference type="PROSITE-ProRule" id="PRU01319"/>
    </source>
</evidence>
<keyword id="KW-0963">Cytoplasm</keyword>
<keyword id="KW-0255">Endonuclease</keyword>
<keyword id="KW-0378">Hydrolase</keyword>
<keyword id="KW-0464">Manganese</keyword>
<keyword id="KW-0479">Metal-binding</keyword>
<keyword id="KW-0540">Nuclease</keyword>
<keyword id="KW-1185">Reference proteome</keyword>
<comment type="function">
    <text evidence="1">Endonuclease that specifically degrades the RNA of RNA-DNA hybrids.</text>
</comment>
<comment type="catalytic activity">
    <reaction evidence="1">
        <text>Endonucleolytic cleavage to 5'-phosphomonoester.</text>
        <dbReference type="EC" id="3.1.26.4"/>
    </reaction>
</comment>
<comment type="cofactor">
    <cofactor evidence="1">
        <name>Mn(2+)</name>
        <dbReference type="ChEBI" id="CHEBI:29035"/>
    </cofactor>
    <cofactor evidence="1">
        <name>Mg(2+)</name>
        <dbReference type="ChEBI" id="CHEBI:18420"/>
    </cofactor>
    <text evidence="1">Manganese or magnesium. Binds 1 divalent metal ion per monomer in the absence of substrate. May bind a second metal ion after substrate binding.</text>
</comment>
<comment type="subcellular location">
    <subcellularLocation>
        <location evidence="1">Cytoplasm</location>
    </subcellularLocation>
</comment>
<comment type="similarity">
    <text evidence="1">Belongs to the RNase HII family.</text>
</comment>
<feature type="chain" id="PRO_1000202287" description="Ribonuclease HII">
    <location>
        <begin position="1"/>
        <end position="198"/>
    </location>
</feature>
<feature type="domain" description="RNase H type-2" evidence="2">
    <location>
        <begin position="3"/>
        <end position="194"/>
    </location>
</feature>
<feature type="binding site" evidence="1">
    <location>
        <position position="9"/>
    </location>
    <ligand>
        <name>a divalent metal cation</name>
        <dbReference type="ChEBI" id="CHEBI:60240"/>
    </ligand>
</feature>
<feature type="binding site" evidence="1">
    <location>
        <position position="10"/>
    </location>
    <ligand>
        <name>a divalent metal cation</name>
        <dbReference type="ChEBI" id="CHEBI:60240"/>
    </ligand>
</feature>
<feature type="binding site" evidence="1">
    <location>
        <position position="101"/>
    </location>
    <ligand>
        <name>a divalent metal cation</name>
        <dbReference type="ChEBI" id="CHEBI:60240"/>
    </ligand>
</feature>
<accession>C1D4C1</accession>
<name>RNH2_LARHH</name>
<reference key="1">
    <citation type="journal article" date="2009" name="PLoS Genet.">
        <title>The complete genome and proteome of Laribacter hongkongensis reveal potential mechanisms for adaptations to different temperatures and habitats.</title>
        <authorList>
            <person name="Woo P.C.Y."/>
            <person name="Lau S.K.P."/>
            <person name="Tse H."/>
            <person name="Teng J.L.L."/>
            <person name="Curreem S.O."/>
            <person name="Tsang A.K.L."/>
            <person name="Fan R.Y.Y."/>
            <person name="Wong G.K.M."/>
            <person name="Huang Y."/>
            <person name="Loman N.J."/>
            <person name="Snyder L.A.S."/>
            <person name="Cai J.J."/>
            <person name="Huang J.-D."/>
            <person name="Mak W."/>
            <person name="Pallen M.J."/>
            <person name="Lok S."/>
            <person name="Yuen K.-Y."/>
        </authorList>
    </citation>
    <scope>NUCLEOTIDE SEQUENCE [LARGE SCALE GENOMIC DNA]</scope>
    <source>
        <strain>HLHK9</strain>
    </source>
</reference>
<protein>
    <recommendedName>
        <fullName evidence="1">Ribonuclease HII</fullName>
        <shortName evidence="1">RNase HII</shortName>
        <ecNumber evidence="1">3.1.26.4</ecNumber>
    </recommendedName>
</protein>
<organism>
    <name type="scientific">Laribacter hongkongensis (strain HLHK9)</name>
    <dbReference type="NCBI Taxonomy" id="557598"/>
    <lineage>
        <taxon>Bacteria</taxon>
        <taxon>Pseudomonadati</taxon>
        <taxon>Pseudomonadota</taxon>
        <taxon>Betaproteobacteria</taxon>
        <taxon>Neisseriales</taxon>
        <taxon>Aquaspirillaceae</taxon>
        <taxon>Laribacter</taxon>
    </lineage>
</organism>
<proteinExistence type="inferred from homology"/>